<reference key="1">
    <citation type="journal article" date="2009" name="J. Infect. Dis.">
        <title>Clinical, experimental, and genomic differences between intermediately pathogenic, highly pathogenic, and epidemic Streptococcus suis.</title>
        <authorList>
            <person name="Ye C."/>
            <person name="Zheng H."/>
            <person name="Zhang J."/>
            <person name="Jing H."/>
            <person name="Wang L."/>
            <person name="Xiong Y."/>
            <person name="Wang W."/>
            <person name="Zhou Z."/>
            <person name="Sun Q."/>
            <person name="Luo X."/>
            <person name="Du H."/>
            <person name="Gottschalk M."/>
            <person name="Xu J."/>
        </authorList>
    </citation>
    <scope>NUCLEOTIDE SEQUENCE [LARGE SCALE GENOMIC DNA]</scope>
    <source>
        <strain>GZ1</strain>
    </source>
</reference>
<accession>D5AGC8</accession>
<protein>
    <recommendedName>
        <fullName evidence="1">Cell division protein DivIB</fullName>
    </recommendedName>
</protein>
<sequence length="360" mass="40128">MTEKDSNVEESVLEVEQASQVELDSEQISPAEKESVLAEEKEFSTDVDIPEMTAPDDEKSAFFEQWKARHQAYLAHKDEADIQAVDEGQTEQEIPEAKKSKRVLFQGIERKTESLKSKKETGEKVQTLKVDIPSKVVWKAIPVLVTSLLLAALALYFISPTSKKKQIEVVGNERLTAEQVENYSLISPDDYNVTIALHADAYAKNIKKNSSSVETATIKFQFPATFTIHIKEYAIIGYIQQQSQWYPVLSSGEIGGEPISQDSLPEDYTTINLSDKELIKELAIELGKIDAGIRSAIQTINLPPSKVTADLLTFNMRDGNTVLVPLSEISQKVSYYTKIAAEVTVPTTIDMEVGIYRYAS</sequence>
<proteinExistence type="inferred from homology"/>
<comment type="function">
    <text evidence="1">Cell division protein that may be involved in stabilizing or promoting the assembly of the division complex.</text>
</comment>
<comment type="subcellular location">
    <subcellularLocation>
        <location evidence="1">Cell membrane</location>
        <topology evidence="1">Single-pass type II membrane protein</topology>
    </subcellularLocation>
    <text evidence="1">Localizes to the division septum.</text>
</comment>
<comment type="similarity">
    <text evidence="1">Belongs to the FtsQ/DivIB family. DivIB subfamily.</text>
</comment>
<name>DIVIB_STRGZ</name>
<gene>
    <name evidence="1" type="primary">divIB</name>
    <name type="ordered locus">SSGZ1_0428</name>
</gene>
<evidence type="ECO:0000255" key="1">
    <source>
        <dbReference type="HAMAP-Rule" id="MF_00912"/>
    </source>
</evidence>
<evidence type="ECO:0000255" key="2">
    <source>
        <dbReference type="PROSITE-ProRule" id="PRU01115"/>
    </source>
</evidence>
<evidence type="ECO:0000256" key="3">
    <source>
        <dbReference type="SAM" id="MobiDB-lite"/>
    </source>
</evidence>
<organism>
    <name type="scientific">Streptococcus suis (strain GZ1)</name>
    <dbReference type="NCBI Taxonomy" id="423211"/>
    <lineage>
        <taxon>Bacteria</taxon>
        <taxon>Bacillati</taxon>
        <taxon>Bacillota</taxon>
        <taxon>Bacilli</taxon>
        <taxon>Lactobacillales</taxon>
        <taxon>Streptococcaceae</taxon>
        <taxon>Streptococcus</taxon>
    </lineage>
</organism>
<feature type="chain" id="PRO_0000414792" description="Cell division protein DivIB">
    <location>
        <begin position="1"/>
        <end position="360"/>
    </location>
</feature>
<feature type="topological domain" description="Cytoplasmic" evidence="1">
    <location>
        <begin position="1"/>
        <end position="139"/>
    </location>
</feature>
<feature type="transmembrane region" description="Helical" evidence="1">
    <location>
        <begin position="140"/>
        <end position="160"/>
    </location>
</feature>
<feature type="topological domain" description="Extracellular" evidence="1">
    <location>
        <begin position="161"/>
        <end position="360"/>
    </location>
</feature>
<feature type="domain" description="POTRA" evidence="2">
    <location>
        <begin position="162"/>
        <end position="233"/>
    </location>
</feature>
<feature type="region of interest" description="Disordered" evidence="3">
    <location>
        <begin position="1"/>
        <end position="54"/>
    </location>
</feature>
<feature type="compositionally biased region" description="Polar residues" evidence="3">
    <location>
        <begin position="17"/>
        <end position="28"/>
    </location>
</feature>
<feature type="compositionally biased region" description="Basic and acidic residues" evidence="3">
    <location>
        <begin position="31"/>
        <end position="44"/>
    </location>
</feature>
<dbReference type="EMBL" id="CP000837">
    <property type="protein sequence ID" value="ADE30893.1"/>
    <property type="molecule type" value="Genomic_DNA"/>
</dbReference>
<dbReference type="RefSeq" id="WP_014635870.1">
    <property type="nucleotide sequence ID" value="NC_017617.1"/>
</dbReference>
<dbReference type="KEGG" id="ssw:SSGZ1_0428"/>
<dbReference type="PATRIC" id="fig|423211.3.peg.426"/>
<dbReference type="HOGENOM" id="CLU_046278_1_1_9"/>
<dbReference type="Proteomes" id="UP000002359">
    <property type="component" value="Chromosome"/>
</dbReference>
<dbReference type="GO" id="GO:0032153">
    <property type="term" value="C:cell division site"/>
    <property type="evidence" value="ECO:0007669"/>
    <property type="project" value="UniProtKB-UniRule"/>
</dbReference>
<dbReference type="GO" id="GO:0005886">
    <property type="term" value="C:plasma membrane"/>
    <property type="evidence" value="ECO:0007669"/>
    <property type="project" value="UniProtKB-SubCell"/>
</dbReference>
<dbReference type="GO" id="GO:0043093">
    <property type="term" value="P:FtsZ-dependent cytokinesis"/>
    <property type="evidence" value="ECO:0007669"/>
    <property type="project" value="UniProtKB-UniRule"/>
</dbReference>
<dbReference type="Gene3D" id="3.40.50.10960">
    <property type="match status" value="1"/>
</dbReference>
<dbReference type="HAMAP" id="MF_00912">
    <property type="entry name" value="DivIB"/>
    <property type="match status" value="1"/>
</dbReference>
<dbReference type="InterPro" id="IPR005548">
    <property type="entry name" value="Cell_div_FtsQ/DivIB_C"/>
</dbReference>
<dbReference type="InterPro" id="IPR026580">
    <property type="entry name" value="DivIB"/>
</dbReference>
<dbReference type="InterPro" id="IPR050487">
    <property type="entry name" value="FtsQ_DivIB"/>
</dbReference>
<dbReference type="InterPro" id="IPR034746">
    <property type="entry name" value="POTRA"/>
</dbReference>
<dbReference type="InterPro" id="IPR013685">
    <property type="entry name" value="POTRA_FtsQ_type"/>
</dbReference>
<dbReference type="PANTHER" id="PTHR37820">
    <property type="entry name" value="CELL DIVISION PROTEIN DIVIB"/>
    <property type="match status" value="1"/>
</dbReference>
<dbReference type="PANTHER" id="PTHR37820:SF1">
    <property type="entry name" value="CELL DIVISION PROTEIN FTSQ"/>
    <property type="match status" value="1"/>
</dbReference>
<dbReference type="Pfam" id="PF03799">
    <property type="entry name" value="FtsQ_DivIB_C"/>
    <property type="match status" value="1"/>
</dbReference>
<dbReference type="Pfam" id="PF08478">
    <property type="entry name" value="POTRA_1"/>
    <property type="match status" value="1"/>
</dbReference>
<dbReference type="PROSITE" id="PS51779">
    <property type="entry name" value="POTRA"/>
    <property type="match status" value="1"/>
</dbReference>
<keyword id="KW-0131">Cell cycle</keyword>
<keyword id="KW-0132">Cell division</keyword>
<keyword id="KW-1003">Cell membrane</keyword>
<keyword id="KW-0472">Membrane</keyword>
<keyword id="KW-0812">Transmembrane</keyword>
<keyword id="KW-1133">Transmembrane helix</keyword>